<reference key="1">
    <citation type="journal article" date="2010" name="Environ. Microbiol.">
        <title>The genome of Syntrophomonas wolfei: new insights into syntrophic metabolism and biohydrogen production.</title>
        <authorList>
            <person name="Sieber J.R."/>
            <person name="Sims D.R."/>
            <person name="Han C."/>
            <person name="Kim E."/>
            <person name="Lykidis A."/>
            <person name="Lapidus A.L."/>
            <person name="McDonnald E."/>
            <person name="Rohlin L."/>
            <person name="Culley D.E."/>
            <person name="Gunsalus R."/>
            <person name="McInerney M.J."/>
        </authorList>
    </citation>
    <scope>NUCLEOTIDE SEQUENCE [LARGE SCALE GENOMIC DNA]</scope>
    <source>
        <strain>DSM 2245B / Goettingen</strain>
    </source>
</reference>
<evidence type="ECO:0000255" key="1">
    <source>
        <dbReference type="HAMAP-Rule" id="MF_00693"/>
    </source>
</evidence>
<evidence type="ECO:0000256" key="2">
    <source>
        <dbReference type="SAM" id="MobiDB-lite"/>
    </source>
</evidence>
<protein>
    <recommendedName>
        <fullName evidence="1">Probable transcriptional regulatory protein Swol_1435</fullName>
    </recommendedName>
</protein>
<sequence>MAGHSKWANIKHKKARSDEKRGKEFTKIAKEITIAVRSGGSGDPEANSKLKLAIQKAKAINMPNENINRAVKKGTGEIDSETIEEIIYEGYAPGGIAVMLEIATDNRNRTASEIRHLFSKNNGNLGESGCVAWMFKRVGLISIKKDKLNMEEEEFMLKVLDAGAEDVREEDEEYEVLTLPESFMLVKEAMEEEKLLIEEADIVMLPENTVDITDVDMAGKIIKLIELLEDHDDVQNVYTNMSIPDEIIAAL</sequence>
<comment type="subcellular location">
    <subcellularLocation>
        <location evidence="1">Cytoplasm</location>
    </subcellularLocation>
</comment>
<comment type="similarity">
    <text evidence="1">Belongs to the TACO1 family.</text>
</comment>
<name>Y1435_SYNWW</name>
<accession>Q0AX12</accession>
<keyword id="KW-0963">Cytoplasm</keyword>
<keyword id="KW-0238">DNA-binding</keyword>
<keyword id="KW-1185">Reference proteome</keyword>
<keyword id="KW-0804">Transcription</keyword>
<keyword id="KW-0805">Transcription regulation</keyword>
<feature type="chain" id="PRO_1000045386" description="Probable transcriptional regulatory protein Swol_1435">
    <location>
        <begin position="1"/>
        <end position="251"/>
    </location>
</feature>
<feature type="region of interest" description="Disordered" evidence="2">
    <location>
        <begin position="1"/>
        <end position="23"/>
    </location>
</feature>
<gene>
    <name type="ordered locus">Swol_1435</name>
</gene>
<organism>
    <name type="scientific">Syntrophomonas wolfei subsp. wolfei (strain DSM 2245B / Goettingen)</name>
    <dbReference type="NCBI Taxonomy" id="335541"/>
    <lineage>
        <taxon>Bacteria</taxon>
        <taxon>Bacillati</taxon>
        <taxon>Bacillota</taxon>
        <taxon>Clostridia</taxon>
        <taxon>Eubacteriales</taxon>
        <taxon>Syntrophomonadaceae</taxon>
        <taxon>Syntrophomonas</taxon>
    </lineage>
</organism>
<dbReference type="EMBL" id="CP000448">
    <property type="protein sequence ID" value="ABI68742.1"/>
    <property type="molecule type" value="Genomic_DNA"/>
</dbReference>
<dbReference type="RefSeq" id="WP_011640841.1">
    <property type="nucleotide sequence ID" value="NC_008346.1"/>
</dbReference>
<dbReference type="SMR" id="Q0AX12"/>
<dbReference type="STRING" id="335541.Swol_1435"/>
<dbReference type="KEGG" id="swo:Swol_1435"/>
<dbReference type="eggNOG" id="COG0217">
    <property type="taxonomic scope" value="Bacteria"/>
</dbReference>
<dbReference type="HOGENOM" id="CLU_062974_2_2_9"/>
<dbReference type="OrthoDB" id="9781053at2"/>
<dbReference type="Proteomes" id="UP000001968">
    <property type="component" value="Chromosome"/>
</dbReference>
<dbReference type="GO" id="GO:0005829">
    <property type="term" value="C:cytosol"/>
    <property type="evidence" value="ECO:0007669"/>
    <property type="project" value="TreeGrafter"/>
</dbReference>
<dbReference type="GO" id="GO:0003677">
    <property type="term" value="F:DNA binding"/>
    <property type="evidence" value="ECO:0007669"/>
    <property type="project" value="UniProtKB-UniRule"/>
</dbReference>
<dbReference type="GO" id="GO:0006355">
    <property type="term" value="P:regulation of DNA-templated transcription"/>
    <property type="evidence" value="ECO:0007669"/>
    <property type="project" value="UniProtKB-UniRule"/>
</dbReference>
<dbReference type="FunFam" id="1.10.10.200:FF:000002">
    <property type="entry name" value="Probable transcriptional regulatory protein CLM62_37755"/>
    <property type="match status" value="1"/>
</dbReference>
<dbReference type="Gene3D" id="1.10.10.200">
    <property type="match status" value="1"/>
</dbReference>
<dbReference type="Gene3D" id="3.30.70.980">
    <property type="match status" value="2"/>
</dbReference>
<dbReference type="HAMAP" id="MF_00693">
    <property type="entry name" value="Transcrip_reg_TACO1"/>
    <property type="match status" value="1"/>
</dbReference>
<dbReference type="InterPro" id="IPR017856">
    <property type="entry name" value="Integrase-like_N"/>
</dbReference>
<dbReference type="InterPro" id="IPR048300">
    <property type="entry name" value="TACO1_YebC-like_2nd/3rd_dom"/>
</dbReference>
<dbReference type="InterPro" id="IPR049083">
    <property type="entry name" value="TACO1_YebC_N"/>
</dbReference>
<dbReference type="InterPro" id="IPR002876">
    <property type="entry name" value="Transcrip_reg_TACO1-like"/>
</dbReference>
<dbReference type="InterPro" id="IPR026564">
    <property type="entry name" value="Transcrip_reg_TACO1-like_dom3"/>
</dbReference>
<dbReference type="InterPro" id="IPR029072">
    <property type="entry name" value="YebC-like"/>
</dbReference>
<dbReference type="NCBIfam" id="NF001030">
    <property type="entry name" value="PRK00110.1"/>
    <property type="match status" value="1"/>
</dbReference>
<dbReference type="NCBIfam" id="NF009044">
    <property type="entry name" value="PRK12378.1"/>
    <property type="match status" value="1"/>
</dbReference>
<dbReference type="NCBIfam" id="TIGR01033">
    <property type="entry name" value="YebC/PmpR family DNA-binding transcriptional regulator"/>
    <property type="match status" value="1"/>
</dbReference>
<dbReference type="PANTHER" id="PTHR12532:SF6">
    <property type="entry name" value="TRANSCRIPTIONAL REGULATORY PROTEIN YEBC-RELATED"/>
    <property type="match status" value="1"/>
</dbReference>
<dbReference type="PANTHER" id="PTHR12532">
    <property type="entry name" value="TRANSLATIONAL ACTIVATOR OF CYTOCHROME C OXIDASE 1"/>
    <property type="match status" value="1"/>
</dbReference>
<dbReference type="Pfam" id="PF20772">
    <property type="entry name" value="TACO1_YebC_N"/>
    <property type="match status" value="1"/>
</dbReference>
<dbReference type="Pfam" id="PF01709">
    <property type="entry name" value="Transcrip_reg"/>
    <property type="match status" value="1"/>
</dbReference>
<dbReference type="SUPFAM" id="SSF75625">
    <property type="entry name" value="YebC-like"/>
    <property type="match status" value="1"/>
</dbReference>
<proteinExistence type="inferred from homology"/>